<gene>
    <name type="primary">Slc22a20</name>
    <name evidence="9 10" type="synonym">Gm963</name>
    <name type="synonym">Oat6</name>
</gene>
<comment type="function">
    <text evidence="4 5">Organic anion transporter that mediates the uptake of estrone sulfate. Inhibited by probenecid, propionate, 2-methylbutyrate, 3-methylbutyrate, benzoate, heptanoate and 2-ethylhaxanoate. May act as an odorant transporter.</text>
</comment>
<comment type="biophysicochemical properties">
    <kinetics>
        <KM evidence="4 6 7">109.8 uM for estrone sulfate</KM>
        <Vmax evidence="4 6 7">40.0 pmol/h/mg enzyme for ES uptake</Vmax>
        <Vmax evidence="4 6 7">4.6 pmol/h/mg enzyme for PAH uptake</Vmax>
        <Vmax evidence="4 6 7">0.9 pmol/h/mg enzyme for prostaglandin E2 uptake</Vmax>
        <Vmax evidence="4 6 7">0.28 pmol/h/mg enzyme for ibuprofen uptake</Vmax>
        <Vmax evidence="4 6 7">4.8 pmol/h/mg enzyme for ochratoxin A uptake</Vmax>
        <Vmax evidence="4 6 7">5.1 pmol/h/mg enzyme for fluorescein uptake</Vmax>
        <Vmax evidence="4 6 7">2.1 pmol/h/mg enzyme for 2-carboxyfluorescein-DM uptake</Vmax>
        <Vmax evidence="4 6 7">3.9 pmol/h/mg enzyme for eosin-Y uptake</Vmax>
    </kinetics>
</comment>
<comment type="subcellular location">
    <subcellularLocation>
        <location evidence="8">Membrane</location>
        <topology evidence="8">Multi-pass membrane protein</topology>
    </subcellularLocation>
</comment>
<comment type="tissue specificity">
    <text evidence="3 5">Highly expressed in olfactory mucosa. Weakly expressed in testis. Not detected in heart, spleen, lung, kidney or brain.</text>
</comment>
<comment type="developmental stage">
    <text evidence="3">Expressed at embryonic day 7, but not later in embryogenesis. Expressed in adult.</text>
</comment>
<comment type="similarity">
    <text evidence="8">Belongs to the major facilitator (TC 2.A.1) superfamily. Organic cation transporter (TC 2.A.1.19) family.</text>
</comment>
<feature type="chain" id="PRO_0000220512" description="Solute carrier family 22 member 20">
    <location>
        <begin position="1"/>
        <end position="556"/>
    </location>
</feature>
<feature type="topological domain" description="Cytoplasmic" evidence="1">
    <location>
        <begin position="1"/>
        <end position="15"/>
    </location>
</feature>
<feature type="transmembrane region" description="Helical" evidence="1">
    <location>
        <begin position="16"/>
        <end position="36"/>
    </location>
</feature>
<feature type="topological domain" description="Extracellular" evidence="1">
    <location>
        <begin position="37"/>
        <end position="137"/>
    </location>
</feature>
<feature type="transmembrane region" description="Helical" evidence="1">
    <location>
        <begin position="138"/>
        <end position="158"/>
    </location>
</feature>
<feature type="topological domain" description="Cytoplasmic" evidence="1">
    <location>
        <begin position="159"/>
        <end position="166"/>
    </location>
</feature>
<feature type="transmembrane region" description="Helical" evidence="1">
    <location>
        <begin position="167"/>
        <end position="187"/>
    </location>
</feature>
<feature type="topological domain" description="Extracellular" evidence="1">
    <location>
        <begin position="188"/>
        <end position="194"/>
    </location>
</feature>
<feature type="transmembrane region" description="Helical" evidence="1">
    <location>
        <begin position="195"/>
        <end position="215"/>
    </location>
</feature>
<feature type="topological domain" description="Cytoplasmic" evidence="1">
    <location>
        <begin position="216"/>
        <end position="225"/>
    </location>
</feature>
<feature type="transmembrane region" description="Helical" evidence="1">
    <location>
        <begin position="226"/>
        <end position="246"/>
    </location>
</feature>
<feature type="topological domain" description="Extracellular" evidence="1">
    <location>
        <begin position="247"/>
        <end position="250"/>
    </location>
</feature>
<feature type="transmembrane region" description="Helical" evidence="1">
    <location>
        <begin position="251"/>
        <end position="271"/>
    </location>
</feature>
<feature type="topological domain" description="Cytoplasmic" evidence="1">
    <location>
        <begin position="272"/>
        <end position="339"/>
    </location>
</feature>
<feature type="transmembrane region" description="Helical" evidence="1">
    <location>
        <begin position="340"/>
        <end position="360"/>
    </location>
</feature>
<feature type="topological domain" description="Extracellular" evidence="1">
    <location>
        <begin position="361"/>
        <end position="366"/>
    </location>
</feature>
<feature type="transmembrane region" description="Helical" evidence="1">
    <location>
        <begin position="367"/>
        <end position="387"/>
    </location>
</feature>
<feature type="topological domain" description="Cytoplasmic" evidence="1">
    <location>
        <begin position="388"/>
        <end position="397"/>
    </location>
</feature>
<feature type="transmembrane region" description="Helical" evidence="1">
    <location>
        <begin position="398"/>
        <end position="418"/>
    </location>
</feature>
<feature type="topological domain" description="Extracellular" evidence="1">
    <location>
        <begin position="419"/>
        <end position="425"/>
    </location>
</feature>
<feature type="transmembrane region" description="Helical" evidence="1">
    <location>
        <begin position="426"/>
        <end position="446"/>
    </location>
</feature>
<feature type="topological domain" description="Cytoplasmic" evidence="1">
    <location>
        <begin position="447"/>
        <end position="457"/>
    </location>
</feature>
<feature type="transmembrane region" description="Helical" evidence="1">
    <location>
        <begin position="458"/>
        <end position="478"/>
    </location>
</feature>
<feature type="topological domain" description="Extracellular" evidence="1">
    <location>
        <begin position="479"/>
        <end position="485"/>
    </location>
</feature>
<feature type="transmembrane region" description="Helical" evidence="1">
    <location>
        <begin position="486"/>
        <end position="506"/>
    </location>
</feature>
<feature type="topological domain" description="Cytoplasmic" evidence="1">
    <location>
        <begin position="507"/>
        <end position="556"/>
    </location>
</feature>
<feature type="region of interest" description="Disordered" evidence="2">
    <location>
        <begin position="526"/>
        <end position="556"/>
    </location>
</feature>
<feature type="compositionally biased region" description="Basic and acidic residues" evidence="2">
    <location>
        <begin position="526"/>
        <end position="541"/>
    </location>
</feature>
<feature type="glycosylation site" description="N-linked (GlcNAc...) asparagine" evidence="1">
    <location>
        <position position="39"/>
    </location>
</feature>
<feature type="glycosylation site" description="N-linked (GlcNAc...) asparagine" evidence="1">
    <location>
        <position position="54"/>
    </location>
</feature>
<feature type="glycosylation site" description="N-linked (GlcNAc...) asparagine" evidence="1">
    <location>
        <position position="61"/>
    </location>
</feature>
<feature type="glycosylation site" description="N-linked (GlcNAc...) asparagine" evidence="1">
    <location>
        <position position="96"/>
    </location>
</feature>
<evidence type="ECO:0000255" key="1"/>
<evidence type="ECO:0000256" key="2">
    <source>
        <dbReference type="SAM" id="MobiDB-lite"/>
    </source>
</evidence>
<evidence type="ECO:0000269" key="3">
    <source>
    </source>
</evidence>
<evidence type="ECO:0000269" key="4">
    <source>
    </source>
</evidence>
<evidence type="ECO:0000269" key="5">
    <source>
    </source>
</evidence>
<evidence type="ECO:0000269" key="6">
    <source>
    </source>
</evidence>
<evidence type="ECO:0000269" key="7">
    <source>
    </source>
</evidence>
<evidence type="ECO:0000305" key="8"/>
<evidence type="ECO:0000312" key="9">
    <source>
        <dbReference type="EMBL" id="AAH46588.1"/>
    </source>
</evidence>
<evidence type="ECO:0000312" key="10">
    <source>
        <dbReference type="MGI" id="MGI:2685809"/>
    </source>
</evidence>
<keyword id="KW-0325">Glycoprotein</keyword>
<keyword id="KW-0406">Ion transport</keyword>
<keyword id="KW-0472">Membrane</keyword>
<keyword id="KW-1185">Reference proteome</keyword>
<keyword id="KW-0812">Transmembrane</keyword>
<keyword id="KW-1133">Transmembrane helix</keyword>
<keyword id="KW-0813">Transport</keyword>
<dbReference type="EMBL" id="AY194118">
    <property type="protein sequence ID" value="AAO91751.1"/>
    <property type="molecule type" value="mRNA"/>
</dbReference>
<dbReference type="EMBL" id="BC046588">
    <property type="protein sequence ID" value="AAH46588.1"/>
    <property type="molecule type" value="mRNA"/>
</dbReference>
<dbReference type="CCDS" id="CCDS29486.1"/>
<dbReference type="RefSeq" id="NP_941052.1">
    <property type="nucleotide sequence ID" value="NM_198650.2"/>
</dbReference>
<dbReference type="SMR" id="Q80UJ1"/>
<dbReference type="FunCoup" id="Q80UJ1">
    <property type="interactions" value="14"/>
</dbReference>
<dbReference type="STRING" id="10090.ENSMUSP00000049473"/>
<dbReference type="BindingDB" id="Q80UJ1"/>
<dbReference type="ChEMBL" id="CHEMBL5269"/>
<dbReference type="DrugCentral" id="Q80UJ1"/>
<dbReference type="TCDB" id="2.A.1.19.16">
    <property type="family name" value="the major facilitator superfamily (mfs)"/>
</dbReference>
<dbReference type="GlyCosmos" id="Q80UJ1">
    <property type="glycosylation" value="4 sites, No reported glycans"/>
</dbReference>
<dbReference type="GlyGen" id="Q80UJ1">
    <property type="glycosylation" value="4 sites"/>
</dbReference>
<dbReference type="iPTMnet" id="Q80UJ1"/>
<dbReference type="PhosphoSitePlus" id="Q80UJ1"/>
<dbReference type="PaxDb" id="10090-ENSMUSP00000049473"/>
<dbReference type="ProteomicsDB" id="253361"/>
<dbReference type="DNASU" id="381203"/>
<dbReference type="Ensembl" id="ENSMUST00000041827.8">
    <property type="protein sequence ID" value="ENSMUSP00000049473.8"/>
    <property type="gene ID" value="ENSMUSG00000037451.9"/>
</dbReference>
<dbReference type="GeneID" id="381203"/>
<dbReference type="KEGG" id="mmu:381203"/>
<dbReference type="UCSC" id="uc008ggh.1">
    <property type="organism name" value="mouse"/>
</dbReference>
<dbReference type="AGR" id="MGI:2685809"/>
<dbReference type="CTD" id="381203"/>
<dbReference type="MGI" id="MGI:2685809">
    <property type="gene designation" value="Slc22a20"/>
</dbReference>
<dbReference type="VEuPathDB" id="HostDB:ENSMUSG00000037451"/>
<dbReference type="eggNOG" id="KOG0255">
    <property type="taxonomic scope" value="Eukaryota"/>
</dbReference>
<dbReference type="GeneTree" id="ENSGT00940000162438"/>
<dbReference type="HOGENOM" id="CLU_001265_33_3_1"/>
<dbReference type="InParanoid" id="Q80UJ1"/>
<dbReference type="OMA" id="PEPCQRF"/>
<dbReference type="OrthoDB" id="2544694at2759"/>
<dbReference type="PhylomeDB" id="Q80UJ1"/>
<dbReference type="TreeFam" id="TF315847"/>
<dbReference type="BioGRID-ORCS" id="381203">
    <property type="hits" value="1 hit in 75 CRISPR screens"/>
</dbReference>
<dbReference type="PRO" id="PR:Q80UJ1"/>
<dbReference type="Proteomes" id="UP000000589">
    <property type="component" value="Chromosome 19"/>
</dbReference>
<dbReference type="RNAct" id="Q80UJ1">
    <property type="molecule type" value="protein"/>
</dbReference>
<dbReference type="Bgee" id="ENSMUSG00000037451">
    <property type="expression patterns" value="Expressed in granulocyte and 5 other cell types or tissues"/>
</dbReference>
<dbReference type="GO" id="GO:0016020">
    <property type="term" value="C:membrane"/>
    <property type="evidence" value="ECO:0007669"/>
    <property type="project" value="UniProtKB-SubCell"/>
</dbReference>
<dbReference type="GO" id="GO:0008514">
    <property type="term" value="F:organic anion transmembrane transporter activity"/>
    <property type="evidence" value="ECO:0000303"/>
    <property type="project" value="UniProtKB"/>
</dbReference>
<dbReference type="GO" id="GO:0006811">
    <property type="term" value="P:monoatomic ion transport"/>
    <property type="evidence" value="ECO:0007669"/>
    <property type="project" value="UniProtKB-KW"/>
</dbReference>
<dbReference type="GO" id="GO:0015711">
    <property type="term" value="P:organic anion transport"/>
    <property type="evidence" value="ECO:0000303"/>
    <property type="project" value="UniProtKB"/>
</dbReference>
<dbReference type="CDD" id="cd17446">
    <property type="entry name" value="MFS_SLC22A6_OAT1_like"/>
    <property type="match status" value="1"/>
</dbReference>
<dbReference type="FunFam" id="1.20.1250.20:FF:000023">
    <property type="entry name" value="Solute carrier family 22 member 6"/>
    <property type="match status" value="1"/>
</dbReference>
<dbReference type="Gene3D" id="1.20.1250.20">
    <property type="entry name" value="MFS general substrate transporter like domains"/>
    <property type="match status" value="1"/>
</dbReference>
<dbReference type="InterPro" id="IPR020846">
    <property type="entry name" value="MFS_dom"/>
</dbReference>
<dbReference type="InterPro" id="IPR005828">
    <property type="entry name" value="MFS_sugar_transport-like"/>
</dbReference>
<dbReference type="InterPro" id="IPR036259">
    <property type="entry name" value="MFS_trans_sf"/>
</dbReference>
<dbReference type="PANTHER" id="PTHR24064">
    <property type="entry name" value="SOLUTE CARRIER FAMILY 22 MEMBER"/>
    <property type="match status" value="1"/>
</dbReference>
<dbReference type="Pfam" id="PF00083">
    <property type="entry name" value="Sugar_tr"/>
    <property type="match status" value="1"/>
</dbReference>
<dbReference type="SUPFAM" id="SSF103473">
    <property type="entry name" value="MFS general substrate transporter"/>
    <property type="match status" value="1"/>
</dbReference>
<dbReference type="PROSITE" id="PS50850">
    <property type="entry name" value="MFS"/>
    <property type="match status" value="1"/>
</dbReference>
<proteinExistence type="evidence at protein level"/>
<sequence length="556" mass="60944">MAFTDLLDALGGVGRFQLVYTALLLLPCGLLACHTFLQNFTAAAPPHHCQHPANYTEPTTNVSGVWLRAAIPLNQHGDPEPCRRYVEPQWALLKPNASSHGVATEGCKDGWVYDRSIFPSTIVMEWDLVCEARTLRDLAQSIYMSGVLVGAALFGGLADRLGRKAPLVWSYLQLAVSGAATAYVGSFSAYCVFRFLMGMTFSGIILNSLSLVVEWMPTRGRTVAGILLGFSFTLGQLILAGVAYLIRPWRWLQFAVSAPFLVFFLYSWWLPESSRWLLLHGKAQQAVQNLQKVAMMNGRKAEGERLTTEVVSSYIQDEFASVRTSNSILDLFRTPAIRRVTCCLMGVWFSNSVAYYGLAMDLQKFGLSIYLVQALFGIIDIPAMLVATTTMIYVGRRATVSSFLILAGLMVIANMFMPEDLQTLRTVQAALGKGCLASSFICVYLFTGELYPTEIRQMGMGFASVNARLGGLVAPLITTLGEISPVLPPVSFGATSVLAGMAVACFLTETRNVPLVETIAAMERRVKQGRSKRDTEQKSEEISLQQLGASPLKETI</sequence>
<name>S22AK_MOUSE</name>
<reference key="1">
    <citation type="submission" date="2002-12" db="EMBL/GenBank/DDBJ databases">
        <title>Sequence of murine OAT1-like organic anion transporter.</title>
        <authorList>
            <person name="Mount D.B."/>
        </authorList>
    </citation>
    <scope>NUCLEOTIDE SEQUENCE [MRNA]</scope>
    <source>
        <strain>C57BL/6J</strain>
    </source>
</reference>
<reference evidence="9" key="2">
    <citation type="journal article" date="2004" name="Genome Res.">
        <title>The status, quality, and expansion of the NIH full-length cDNA project: the Mammalian Gene Collection (MGC).</title>
        <authorList>
            <consortium name="The MGC Project Team"/>
        </authorList>
    </citation>
    <scope>NUCLEOTIDE SEQUENCE [LARGE SCALE MRNA]</scope>
    <source>
        <tissue evidence="9">Olfactory epithelium</tissue>
    </source>
</reference>
<reference evidence="8" key="3">
    <citation type="journal article" date="2004" name="Biochem. Biophys. Res. Commun.">
        <title>Identification of a novel murine organic anion transporter family member, OAT6, expressed in olfactory mucosa.</title>
        <authorList>
            <person name="Monte J.C."/>
            <person name="Nagle M.A."/>
            <person name="Eraly S.A."/>
            <person name="Nigam S.K."/>
        </authorList>
    </citation>
    <scope>PUTATIVE FUNCTION</scope>
    <scope>TISSUE SPECIFICITY</scope>
    <scope>DEVELOPMENTAL STAGE</scope>
</reference>
<reference key="4">
    <citation type="journal article" date="2006" name="Am. J. Physiol.">
        <title>Transport of estrone sulfate by the novel organic anion transporter Oat6 (Slc22a20).</title>
        <authorList>
            <person name="Schnabolk G.W."/>
            <person name="Youngblood G.L."/>
            <person name="Sweet D.H."/>
        </authorList>
    </citation>
    <scope>FUNCTION</scope>
    <scope>BIOPHYSICOCHEMICAL PROPERTIES</scope>
</reference>
<reference key="5">
    <citation type="journal article" date="2006" name="Biochem. Biophys. Res. Commun.">
        <title>Olfactory mucosa-expressed organic anion transporter, Oat6, manifests high affinity interactions with odorant organic anions.</title>
        <authorList>
            <person name="Kaler G."/>
            <person name="Truong D.M."/>
            <person name="Sweeney D.E."/>
            <person name="Logan D.W."/>
            <person name="Nagle M."/>
            <person name="Wu W."/>
            <person name="Eraly S.A."/>
            <person name="Nigam S.K."/>
        </authorList>
    </citation>
    <scope>TISSUE SPECIFICITY</scope>
    <scope>FUNCTION</scope>
</reference>
<reference key="6">
    <citation type="journal article" date="2007" name="J. Biol. Chem.">
        <title>Structural variation governs substrate specificity for organic anion transporter (OAT) homologs. Potential remote sensing by OAT family members.</title>
        <authorList>
            <person name="Kaler G."/>
            <person name="Truong D.M."/>
            <person name="Khandelwal A."/>
            <person name="Nagle M."/>
            <person name="Eraly S.A."/>
            <person name="Swaan P.W."/>
            <person name="Nigam S.K."/>
        </authorList>
    </citation>
    <scope>BIOPHYSICOCHEMICAL PROPERTIES</scope>
</reference>
<reference key="7">
    <citation type="journal article" date="2008" name="J. Biol. Chem.">
        <title>Multi-level analysis of organic anion transporters 1, 3, and 6 reveals major differences in structural determinants of antiviral discrimination.</title>
        <authorList>
            <person name="Truong D.M."/>
            <person name="Kaler G."/>
            <person name="Khandelwal A."/>
            <person name="Swaan P.W."/>
            <person name="Nigam S.K."/>
        </authorList>
    </citation>
    <scope>BIOPHYSICOCHEMICAL PROPERTIES</scope>
</reference>
<accession>Q80UJ1</accession>
<accession>Q5JBT1</accession>
<organism>
    <name type="scientific">Mus musculus</name>
    <name type="common">Mouse</name>
    <dbReference type="NCBI Taxonomy" id="10090"/>
    <lineage>
        <taxon>Eukaryota</taxon>
        <taxon>Metazoa</taxon>
        <taxon>Chordata</taxon>
        <taxon>Craniata</taxon>
        <taxon>Vertebrata</taxon>
        <taxon>Euteleostomi</taxon>
        <taxon>Mammalia</taxon>
        <taxon>Eutheria</taxon>
        <taxon>Euarchontoglires</taxon>
        <taxon>Glires</taxon>
        <taxon>Rodentia</taxon>
        <taxon>Myomorpha</taxon>
        <taxon>Muroidea</taxon>
        <taxon>Muridae</taxon>
        <taxon>Murinae</taxon>
        <taxon>Mus</taxon>
        <taxon>Mus</taxon>
    </lineage>
</organism>
<protein>
    <recommendedName>
        <fullName>Solute carrier family 22 member 20</fullName>
    </recommendedName>
    <alternativeName>
        <fullName>Organic anion transporter 6</fullName>
    </alternativeName>
</protein>